<reference key="1">
    <citation type="journal article" date="2001" name="DNA Res.">
        <title>Complete genomic sequence of the filamentous nitrogen-fixing cyanobacterium Anabaena sp. strain PCC 7120.</title>
        <authorList>
            <person name="Kaneko T."/>
            <person name="Nakamura Y."/>
            <person name="Wolk C.P."/>
            <person name="Kuritz T."/>
            <person name="Sasamoto S."/>
            <person name="Watanabe A."/>
            <person name="Iriguchi M."/>
            <person name="Ishikawa A."/>
            <person name="Kawashima K."/>
            <person name="Kimura T."/>
            <person name="Kishida Y."/>
            <person name="Kohara M."/>
            <person name="Matsumoto M."/>
            <person name="Matsuno A."/>
            <person name="Muraki A."/>
            <person name="Nakazaki N."/>
            <person name="Shimpo S."/>
            <person name="Sugimoto M."/>
            <person name="Takazawa M."/>
            <person name="Yamada M."/>
            <person name="Yasuda M."/>
            <person name="Tabata S."/>
        </authorList>
    </citation>
    <scope>NUCLEOTIDE SEQUENCE [LARGE SCALE GENOMIC DNA]</scope>
    <source>
        <strain>PCC 7120 / SAG 25.82 / UTEX 2576</strain>
    </source>
</reference>
<sequence>MSAEIICVGTELLLGDILNGNAQYLAQQLAQLGIPHYHQTVVGDNPDRIKQVIKIAISRANILIFTGGLGPTPDDLTCETIADFFGSPLVESPAIIEDITQKFAQRGRVMTPSNRKQALIPQGADILPNPTGTAPGIIWEPRPNMTIFTFPGVPSEMHRMWEETAVPFLKSQGWGQEIIYSRSLKFWGIGESALAEKVTAYLNLPNPTVAPYAGKGEVRLRVSAKAPSEAAAEALIAPVEKQIKDIAGLDFYGVNNDSLASVVGELLRSSGETLSVAESCTGGLLGQMLTEISGSSDYFWGGVISYDNSVKAGLLGVNSEDLEKLGAVSDTVAEQMAMGVKTRLSTTWGLSITGIAGPDGGTETKPVGLVYIGLAGPGDEVSSFKYNFGTMRVGLRPTVGDRSFIRHLSACTALDLLRRRLLTR</sequence>
<accession>Q8YMW6</accession>
<name>CINAL_NOSS1</name>
<proteinExistence type="inferred from homology"/>
<gene>
    <name type="ordered locus">alr4808</name>
</gene>
<comment type="similarity">
    <text evidence="1">Belongs to the CinA family.</text>
</comment>
<keyword id="KW-1185">Reference proteome</keyword>
<organism>
    <name type="scientific">Nostoc sp. (strain PCC 7120 / SAG 25.82 / UTEX 2576)</name>
    <dbReference type="NCBI Taxonomy" id="103690"/>
    <lineage>
        <taxon>Bacteria</taxon>
        <taxon>Bacillati</taxon>
        <taxon>Cyanobacteriota</taxon>
        <taxon>Cyanophyceae</taxon>
        <taxon>Nostocales</taxon>
        <taxon>Nostocaceae</taxon>
        <taxon>Nostoc</taxon>
    </lineage>
</organism>
<protein>
    <recommendedName>
        <fullName evidence="1">CinA-like protein</fullName>
    </recommendedName>
</protein>
<dbReference type="EMBL" id="BA000019">
    <property type="protein sequence ID" value="BAB76507.1"/>
    <property type="molecule type" value="Genomic_DNA"/>
</dbReference>
<dbReference type="PIR" id="AH2406">
    <property type="entry name" value="AH2406"/>
</dbReference>
<dbReference type="RefSeq" id="WP_010998938.1">
    <property type="nucleotide sequence ID" value="NZ_RSCN01000035.1"/>
</dbReference>
<dbReference type="SMR" id="Q8YMW6"/>
<dbReference type="STRING" id="103690.gene:10496861"/>
<dbReference type="KEGG" id="ana:alr4808"/>
<dbReference type="eggNOG" id="COG1058">
    <property type="taxonomic scope" value="Bacteria"/>
</dbReference>
<dbReference type="eggNOG" id="COG1546">
    <property type="taxonomic scope" value="Bacteria"/>
</dbReference>
<dbReference type="OrthoDB" id="9801454at2"/>
<dbReference type="Proteomes" id="UP000002483">
    <property type="component" value="Chromosome"/>
</dbReference>
<dbReference type="CDD" id="cd00885">
    <property type="entry name" value="cinA"/>
    <property type="match status" value="1"/>
</dbReference>
<dbReference type="Gene3D" id="3.30.70.2860">
    <property type="match status" value="1"/>
</dbReference>
<dbReference type="Gene3D" id="3.90.950.20">
    <property type="entry name" value="CinA-like"/>
    <property type="match status" value="1"/>
</dbReference>
<dbReference type="Gene3D" id="3.40.980.10">
    <property type="entry name" value="MoaB/Mog-like domain"/>
    <property type="match status" value="1"/>
</dbReference>
<dbReference type="HAMAP" id="MF_00226_B">
    <property type="entry name" value="CinA_B"/>
    <property type="match status" value="1"/>
</dbReference>
<dbReference type="InterPro" id="IPR050101">
    <property type="entry name" value="CinA"/>
</dbReference>
<dbReference type="InterPro" id="IPR036653">
    <property type="entry name" value="CinA-like_C"/>
</dbReference>
<dbReference type="InterPro" id="IPR008136">
    <property type="entry name" value="CinA_C"/>
</dbReference>
<dbReference type="InterPro" id="IPR041424">
    <property type="entry name" value="CinA_KH"/>
</dbReference>
<dbReference type="InterPro" id="IPR008135">
    <property type="entry name" value="Competence-induced_CinA"/>
</dbReference>
<dbReference type="InterPro" id="IPR036425">
    <property type="entry name" value="MoaB/Mog-like_dom_sf"/>
</dbReference>
<dbReference type="InterPro" id="IPR001453">
    <property type="entry name" value="MoaB/Mog_dom"/>
</dbReference>
<dbReference type="NCBIfam" id="TIGR00200">
    <property type="entry name" value="cinA_nterm"/>
    <property type="match status" value="1"/>
</dbReference>
<dbReference type="NCBIfam" id="TIGR00177">
    <property type="entry name" value="molyb_syn"/>
    <property type="match status" value="1"/>
</dbReference>
<dbReference type="NCBIfam" id="TIGR00199">
    <property type="entry name" value="PncC_domain"/>
    <property type="match status" value="1"/>
</dbReference>
<dbReference type="NCBIfam" id="NF001813">
    <property type="entry name" value="PRK00549.1"/>
    <property type="match status" value="1"/>
</dbReference>
<dbReference type="PANTHER" id="PTHR13939">
    <property type="entry name" value="NICOTINAMIDE-NUCLEOTIDE AMIDOHYDROLASE PNCC"/>
    <property type="match status" value="1"/>
</dbReference>
<dbReference type="PANTHER" id="PTHR13939:SF0">
    <property type="entry name" value="NMN AMIDOHYDROLASE-LIKE PROTEIN YFAY"/>
    <property type="match status" value="1"/>
</dbReference>
<dbReference type="Pfam" id="PF02464">
    <property type="entry name" value="CinA"/>
    <property type="match status" value="1"/>
</dbReference>
<dbReference type="Pfam" id="PF18146">
    <property type="entry name" value="CinA_KH"/>
    <property type="match status" value="1"/>
</dbReference>
<dbReference type="Pfam" id="PF00994">
    <property type="entry name" value="MoCF_biosynth"/>
    <property type="match status" value="1"/>
</dbReference>
<dbReference type="PIRSF" id="PIRSF006728">
    <property type="entry name" value="CinA"/>
    <property type="match status" value="1"/>
</dbReference>
<dbReference type="SMART" id="SM00852">
    <property type="entry name" value="MoCF_biosynth"/>
    <property type="match status" value="1"/>
</dbReference>
<dbReference type="SUPFAM" id="SSF142433">
    <property type="entry name" value="CinA-like"/>
    <property type="match status" value="1"/>
</dbReference>
<dbReference type="SUPFAM" id="SSF53218">
    <property type="entry name" value="Molybdenum cofactor biosynthesis proteins"/>
    <property type="match status" value="1"/>
</dbReference>
<evidence type="ECO:0000255" key="1">
    <source>
        <dbReference type="HAMAP-Rule" id="MF_00226"/>
    </source>
</evidence>
<feature type="chain" id="PRO_0000156745" description="CinA-like protein">
    <location>
        <begin position="1"/>
        <end position="424"/>
    </location>
</feature>